<sequence length="108" mass="11954">MSRAPISRTFTEGRLAQVLVAPIISEKATSIGEKHNQVLFKVLQDATKIEIKAAVELMFKVEVESVQVLNQKGKTKRFGGRTGRRDHLRKAYVSLKAGQELNFSGEAA</sequence>
<reference key="1">
    <citation type="submission" date="2008-03" db="EMBL/GenBank/DDBJ databases">
        <title>Complete sequence of Leptothrix cholodnii SP-6.</title>
        <authorList>
            <consortium name="US DOE Joint Genome Institute"/>
            <person name="Copeland A."/>
            <person name="Lucas S."/>
            <person name="Lapidus A."/>
            <person name="Glavina del Rio T."/>
            <person name="Dalin E."/>
            <person name="Tice H."/>
            <person name="Bruce D."/>
            <person name="Goodwin L."/>
            <person name="Pitluck S."/>
            <person name="Chertkov O."/>
            <person name="Brettin T."/>
            <person name="Detter J.C."/>
            <person name="Han C."/>
            <person name="Kuske C.R."/>
            <person name="Schmutz J."/>
            <person name="Larimer F."/>
            <person name="Land M."/>
            <person name="Hauser L."/>
            <person name="Kyrpides N."/>
            <person name="Lykidis A."/>
            <person name="Emerson D."/>
            <person name="Richardson P."/>
        </authorList>
    </citation>
    <scope>NUCLEOTIDE SEQUENCE [LARGE SCALE GENOMIC DNA]</scope>
    <source>
        <strain>ATCC 51168 / LMG 8142 / SP-6</strain>
    </source>
</reference>
<gene>
    <name evidence="1" type="primary">rplW</name>
    <name type="ordered locus">Lcho_3997</name>
</gene>
<evidence type="ECO:0000255" key="1">
    <source>
        <dbReference type="HAMAP-Rule" id="MF_01369"/>
    </source>
</evidence>
<evidence type="ECO:0000305" key="2"/>
<comment type="function">
    <text evidence="1">One of the early assembly proteins it binds 23S rRNA. One of the proteins that surrounds the polypeptide exit tunnel on the outside of the ribosome. Forms the main docking site for trigger factor binding to the ribosome.</text>
</comment>
<comment type="subunit">
    <text evidence="1">Part of the 50S ribosomal subunit. Contacts protein L29, and trigger factor when it is bound to the ribosome.</text>
</comment>
<comment type="similarity">
    <text evidence="1">Belongs to the universal ribosomal protein uL23 family.</text>
</comment>
<organism>
    <name type="scientific">Leptothrix cholodnii (strain ATCC 51168 / LMG 8142 / SP-6)</name>
    <name type="common">Leptothrix discophora (strain SP-6)</name>
    <dbReference type="NCBI Taxonomy" id="395495"/>
    <lineage>
        <taxon>Bacteria</taxon>
        <taxon>Pseudomonadati</taxon>
        <taxon>Pseudomonadota</taxon>
        <taxon>Betaproteobacteria</taxon>
        <taxon>Burkholderiales</taxon>
        <taxon>Sphaerotilaceae</taxon>
        <taxon>Leptothrix</taxon>
    </lineage>
</organism>
<name>RL23_LEPCP</name>
<protein>
    <recommendedName>
        <fullName evidence="1">Large ribosomal subunit protein uL23</fullName>
    </recommendedName>
    <alternativeName>
        <fullName evidence="2">50S ribosomal protein L23</fullName>
    </alternativeName>
</protein>
<feature type="chain" id="PRO_1000144584" description="Large ribosomal subunit protein uL23">
    <location>
        <begin position="1"/>
        <end position="108"/>
    </location>
</feature>
<accession>B1Y8I5</accession>
<keyword id="KW-1185">Reference proteome</keyword>
<keyword id="KW-0687">Ribonucleoprotein</keyword>
<keyword id="KW-0689">Ribosomal protein</keyword>
<keyword id="KW-0694">RNA-binding</keyword>
<keyword id="KW-0699">rRNA-binding</keyword>
<dbReference type="EMBL" id="CP001013">
    <property type="protein sequence ID" value="ACB36251.1"/>
    <property type="molecule type" value="Genomic_DNA"/>
</dbReference>
<dbReference type="RefSeq" id="WP_012348996.1">
    <property type="nucleotide sequence ID" value="NC_010524.1"/>
</dbReference>
<dbReference type="SMR" id="B1Y8I5"/>
<dbReference type="STRING" id="395495.Lcho_3997"/>
<dbReference type="KEGG" id="lch:Lcho_3997"/>
<dbReference type="eggNOG" id="COG0089">
    <property type="taxonomic scope" value="Bacteria"/>
</dbReference>
<dbReference type="HOGENOM" id="CLU_037562_3_1_4"/>
<dbReference type="OrthoDB" id="9793353at2"/>
<dbReference type="Proteomes" id="UP000001693">
    <property type="component" value="Chromosome"/>
</dbReference>
<dbReference type="GO" id="GO:1990904">
    <property type="term" value="C:ribonucleoprotein complex"/>
    <property type="evidence" value="ECO:0007669"/>
    <property type="project" value="UniProtKB-KW"/>
</dbReference>
<dbReference type="GO" id="GO:0005840">
    <property type="term" value="C:ribosome"/>
    <property type="evidence" value="ECO:0007669"/>
    <property type="project" value="UniProtKB-KW"/>
</dbReference>
<dbReference type="GO" id="GO:0019843">
    <property type="term" value="F:rRNA binding"/>
    <property type="evidence" value="ECO:0007669"/>
    <property type="project" value="UniProtKB-UniRule"/>
</dbReference>
<dbReference type="GO" id="GO:0003735">
    <property type="term" value="F:structural constituent of ribosome"/>
    <property type="evidence" value="ECO:0007669"/>
    <property type="project" value="InterPro"/>
</dbReference>
<dbReference type="GO" id="GO:0006412">
    <property type="term" value="P:translation"/>
    <property type="evidence" value="ECO:0007669"/>
    <property type="project" value="UniProtKB-UniRule"/>
</dbReference>
<dbReference type="FunFam" id="3.30.70.330:FF:000001">
    <property type="entry name" value="50S ribosomal protein L23"/>
    <property type="match status" value="1"/>
</dbReference>
<dbReference type="Gene3D" id="3.30.70.330">
    <property type="match status" value="1"/>
</dbReference>
<dbReference type="HAMAP" id="MF_01369_B">
    <property type="entry name" value="Ribosomal_uL23_B"/>
    <property type="match status" value="1"/>
</dbReference>
<dbReference type="InterPro" id="IPR012677">
    <property type="entry name" value="Nucleotide-bd_a/b_plait_sf"/>
</dbReference>
<dbReference type="InterPro" id="IPR013025">
    <property type="entry name" value="Ribosomal_uL23-like"/>
</dbReference>
<dbReference type="InterPro" id="IPR012678">
    <property type="entry name" value="Ribosomal_uL23/eL15/eS24_sf"/>
</dbReference>
<dbReference type="NCBIfam" id="NF004359">
    <property type="entry name" value="PRK05738.1-3"/>
    <property type="match status" value="1"/>
</dbReference>
<dbReference type="NCBIfam" id="NF004363">
    <property type="entry name" value="PRK05738.2-4"/>
    <property type="match status" value="1"/>
</dbReference>
<dbReference type="PANTHER" id="PTHR11620">
    <property type="entry name" value="60S RIBOSOMAL PROTEIN L23A"/>
    <property type="match status" value="1"/>
</dbReference>
<dbReference type="Pfam" id="PF00276">
    <property type="entry name" value="Ribosomal_L23"/>
    <property type="match status" value="1"/>
</dbReference>
<dbReference type="SUPFAM" id="SSF54189">
    <property type="entry name" value="Ribosomal proteins S24e, L23 and L15e"/>
    <property type="match status" value="1"/>
</dbReference>
<proteinExistence type="inferred from homology"/>